<organism>
    <name type="scientific">Actinobacillus pleuropneumoniae serotype 7 (strain AP76)</name>
    <dbReference type="NCBI Taxonomy" id="537457"/>
    <lineage>
        <taxon>Bacteria</taxon>
        <taxon>Pseudomonadati</taxon>
        <taxon>Pseudomonadota</taxon>
        <taxon>Gammaproteobacteria</taxon>
        <taxon>Pasteurellales</taxon>
        <taxon>Pasteurellaceae</taxon>
        <taxon>Actinobacillus</taxon>
    </lineage>
</organism>
<gene>
    <name evidence="1" type="primary">trpB</name>
    <name type="ordered locus">APP7_0546</name>
</gene>
<keyword id="KW-0028">Amino-acid biosynthesis</keyword>
<keyword id="KW-0057">Aromatic amino acid biosynthesis</keyword>
<keyword id="KW-0456">Lyase</keyword>
<keyword id="KW-0663">Pyridoxal phosphate</keyword>
<keyword id="KW-0822">Tryptophan biosynthesis</keyword>
<comment type="function">
    <text evidence="1">The beta subunit is responsible for the synthesis of L-tryptophan from indole and L-serine.</text>
</comment>
<comment type="catalytic activity">
    <reaction evidence="1">
        <text>(1S,2R)-1-C-(indol-3-yl)glycerol 3-phosphate + L-serine = D-glyceraldehyde 3-phosphate + L-tryptophan + H2O</text>
        <dbReference type="Rhea" id="RHEA:10532"/>
        <dbReference type="ChEBI" id="CHEBI:15377"/>
        <dbReference type="ChEBI" id="CHEBI:33384"/>
        <dbReference type="ChEBI" id="CHEBI:57912"/>
        <dbReference type="ChEBI" id="CHEBI:58866"/>
        <dbReference type="ChEBI" id="CHEBI:59776"/>
        <dbReference type="EC" id="4.2.1.20"/>
    </reaction>
</comment>
<comment type="cofactor">
    <cofactor evidence="1">
        <name>pyridoxal 5'-phosphate</name>
        <dbReference type="ChEBI" id="CHEBI:597326"/>
    </cofactor>
</comment>
<comment type="pathway">
    <text evidence="1">Amino-acid biosynthesis; L-tryptophan biosynthesis; L-tryptophan from chorismate: step 5/5.</text>
</comment>
<comment type="subunit">
    <text evidence="1">Tetramer of two alpha and two beta chains.</text>
</comment>
<comment type="similarity">
    <text evidence="1">Belongs to the TrpB family.</text>
</comment>
<proteinExistence type="inferred from homology"/>
<sequence length="396" mass="42799">MSDTLLNPYFGEFGGMYVPEILVPVLKQLEETFVAAQNDPLFQAEFTDLLKNYAGRPTALTLCRNLTKGSKTKLYLKREDLLHGGAHKTNQVLGQALLAKRMGKTRIIAETGAGQHGVATALACAMLDLPCVIYMGAKDVERQSPNVFRMRLMGAEVIPVQKGSCSLKDACCEAMRDWAANYETTHYLIGTAAGPHPFPTMVREFQKMIGEETKRQILEKENRLPDAVIAAVGGGSNAIGMFAGFIEEKSVQLIGVEPAGKGIETGEHGAPLKHGTTGIYFGMKSPIMQTKDGQIEESYSISAGLDFPSVGPQHAYLNASGRADYVSITDKEALDAFQALAQHEGIIPALESSHALAYALKLIAQNPDKEQLLVVNLSGRGDKDIFTVDKILNGGN</sequence>
<name>TRPB_ACTP7</name>
<feature type="chain" id="PRO_1000095771" description="Tryptophan synthase beta chain">
    <location>
        <begin position="1"/>
        <end position="396"/>
    </location>
</feature>
<feature type="modified residue" description="N6-(pyridoxal phosphate)lysine" evidence="1">
    <location>
        <position position="88"/>
    </location>
</feature>
<dbReference type="EC" id="4.2.1.20" evidence="1"/>
<dbReference type="EMBL" id="CP001091">
    <property type="protein sequence ID" value="ACE61198.1"/>
    <property type="molecule type" value="Genomic_DNA"/>
</dbReference>
<dbReference type="RefSeq" id="WP_005600563.1">
    <property type="nucleotide sequence ID" value="NC_010939.1"/>
</dbReference>
<dbReference type="SMR" id="B3GX46"/>
<dbReference type="KEGG" id="apa:APP7_0546"/>
<dbReference type="HOGENOM" id="CLU_016734_3_1_6"/>
<dbReference type="UniPathway" id="UPA00035">
    <property type="reaction ID" value="UER00044"/>
</dbReference>
<dbReference type="Proteomes" id="UP000001226">
    <property type="component" value="Chromosome"/>
</dbReference>
<dbReference type="GO" id="GO:0005737">
    <property type="term" value="C:cytoplasm"/>
    <property type="evidence" value="ECO:0007669"/>
    <property type="project" value="TreeGrafter"/>
</dbReference>
<dbReference type="GO" id="GO:0004834">
    <property type="term" value="F:tryptophan synthase activity"/>
    <property type="evidence" value="ECO:0007669"/>
    <property type="project" value="UniProtKB-UniRule"/>
</dbReference>
<dbReference type="CDD" id="cd06446">
    <property type="entry name" value="Trp-synth_B"/>
    <property type="match status" value="1"/>
</dbReference>
<dbReference type="FunFam" id="3.40.50.1100:FF:000001">
    <property type="entry name" value="Tryptophan synthase beta chain"/>
    <property type="match status" value="1"/>
</dbReference>
<dbReference type="FunFam" id="3.40.50.1100:FF:000004">
    <property type="entry name" value="Tryptophan synthase beta chain"/>
    <property type="match status" value="1"/>
</dbReference>
<dbReference type="Gene3D" id="3.40.50.1100">
    <property type="match status" value="2"/>
</dbReference>
<dbReference type="HAMAP" id="MF_00133">
    <property type="entry name" value="Trp_synth_beta"/>
    <property type="match status" value="1"/>
</dbReference>
<dbReference type="InterPro" id="IPR006653">
    <property type="entry name" value="Trp_synth_b_CS"/>
</dbReference>
<dbReference type="InterPro" id="IPR006654">
    <property type="entry name" value="Trp_synth_beta"/>
</dbReference>
<dbReference type="InterPro" id="IPR023026">
    <property type="entry name" value="Trp_synth_beta/beta-like"/>
</dbReference>
<dbReference type="InterPro" id="IPR001926">
    <property type="entry name" value="TrpB-like_PALP"/>
</dbReference>
<dbReference type="InterPro" id="IPR036052">
    <property type="entry name" value="TrpB-like_PALP_sf"/>
</dbReference>
<dbReference type="NCBIfam" id="TIGR00263">
    <property type="entry name" value="trpB"/>
    <property type="match status" value="1"/>
</dbReference>
<dbReference type="PANTHER" id="PTHR48077:SF3">
    <property type="entry name" value="TRYPTOPHAN SYNTHASE"/>
    <property type="match status" value="1"/>
</dbReference>
<dbReference type="PANTHER" id="PTHR48077">
    <property type="entry name" value="TRYPTOPHAN SYNTHASE-RELATED"/>
    <property type="match status" value="1"/>
</dbReference>
<dbReference type="Pfam" id="PF00291">
    <property type="entry name" value="PALP"/>
    <property type="match status" value="1"/>
</dbReference>
<dbReference type="PIRSF" id="PIRSF001413">
    <property type="entry name" value="Trp_syn_beta"/>
    <property type="match status" value="1"/>
</dbReference>
<dbReference type="SUPFAM" id="SSF53686">
    <property type="entry name" value="Tryptophan synthase beta subunit-like PLP-dependent enzymes"/>
    <property type="match status" value="1"/>
</dbReference>
<dbReference type="PROSITE" id="PS00168">
    <property type="entry name" value="TRP_SYNTHASE_BETA"/>
    <property type="match status" value="1"/>
</dbReference>
<evidence type="ECO:0000255" key="1">
    <source>
        <dbReference type="HAMAP-Rule" id="MF_00133"/>
    </source>
</evidence>
<protein>
    <recommendedName>
        <fullName evidence="1">Tryptophan synthase beta chain</fullName>
        <ecNumber evidence="1">4.2.1.20</ecNumber>
    </recommendedName>
</protein>
<accession>B3GX46</accession>
<reference key="1">
    <citation type="submission" date="2008-06" db="EMBL/GenBank/DDBJ databases">
        <title>Genome and proteome analysis of A. pleuropneumoniae serotype 7.</title>
        <authorList>
            <person name="Linke B."/>
            <person name="Buettner F."/>
            <person name="Martinez-Arias R."/>
            <person name="Goesmann A."/>
            <person name="Baltes N."/>
            <person name="Tegetmeyer H."/>
            <person name="Singh M."/>
            <person name="Gerlach G.F."/>
        </authorList>
    </citation>
    <scope>NUCLEOTIDE SEQUENCE [LARGE SCALE GENOMIC DNA]</scope>
    <source>
        <strain>AP76</strain>
    </source>
</reference>